<reference key="1">
    <citation type="journal article" date="2007" name="J. Bacteriol.">
        <title>The genome sequence of avian pathogenic Escherichia coli strain O1:K1:H7 shares strong similarities with human extraintestinal pathogenic E. coli genomes.</title>
        <authorList>
            <person name="Johnson T.J."/>
            <person name="Kariyawasam S."/>
            <person name="Wannemuehler Y."/>
            <person name="Mangiamele P."/>
            <person name="Johnson S.J."/>
            <person name="Doetkott C."/>
            <person name="Skyberg J.A."/>
            <person name="Lynne A.M."/>
            <person name="Johnson J.R."/>
            <person name="Nolan L.K."/>
        </authorList>
    </citation>
    <scope>NUCLEOTIDE SEQUENCE [LARGE SCALE GENOMIC DNA]</scope>
</reference>
<keyword id="KW-0963">Cytoplasm</keyword>
<keyword id="KW-0489">Methyltransferase</keyword>
<keyword id="KW-1185">Reference proteome</keyword>
<keyword id="KW-0698">rRNA processing</keyword>
<keyword id="KW-0949">S-adenosyl-L-methionine</keyword>
<keyword id="KW-0808">Transferase</keyword>
<comment type="function">
    <text evidence="1">Specifically methylates the guanosine in position 1516 of 16S rRNA.</text>
</comment>
<comment type="catalytic activity">
    <reaction evidence="1">
        <text>guanosine(1516) in 16S rRNA + S-adenosyl-L-methionine = N(2)-methylguanosine(1516) in 16S rRNA + S-adenosyl-L-homocysteine + H(+)</text>
        <dbReference type="Rhea" id="RHEA:43220"/>
        <dbReference type="Rhea" id="RHEA-COMP:10412"/>
        <dbReference type="Rhea" id="RHEA-COMP:10413"/>
        <dbReference type="ChEBI" id="CHEBI:15378"/>
        <dbReference type="ChEBI" id="CHEBI:57856"/>
        <dbReference type="ChEBI" id="CHEBI:59789"/>
        <dbReference type="ChEBI" id="CHEBI:74269"/>
        <dbReference type="ChEBI" id="CHEBI:74481"/>
        <dbReference type="EC" id="2.1.1.242"/>
    </reaction>
</comment>
<comment type="subcellular location">
    <subcellularLocation>
        <location evidence="1">Cytoplasm</location>
    </subcellularLocation>
</comment>
<comment type="similarity">
    <text evidence="1">Belongs to the methyltransferase superfamily. RsmJ family.</text>
</comment>
<comment type="sequence caution" evidence="2">
    <conflict type="erroneous initiation">
        <sequence resource="EMBL-CDS" id="ABJ02974"/>
    </conflict>
    <text>Extended N-terminus.</text>
</comment>
<gene>
    <name evidence="1" type="primary">rsmJ</name>
    <name type="synonym">yhiQ</name>
    <name type="ordered locus">Ecok1_34800</name>
    <name type="ORF">APECO1_2956</name>
</gene>
<protein>
    <recommendedName>
        <fullName evidence="1">Ribosomal RNA small subunit methyltransferase J</fullName>
        <ecNumber evidence="1">2.1.1.242</ecNumber>
    </recommendedName>
    <alternativeName>
        <fullName evidence="1">16S rRNA m2G1516 methyltransferase</fullName>
    </alternativeName>
    <alternativeName>
        <fullName evidence="1">rRNA (guanine-N(2)-)-methyltransferase</fullName>
    </alternativeName>
</protein>
<dbReference type="EC" id="2.1.1.242" evidence="1"/>
<dbReference type="EMBL" id="CP000468">
    <property type="protein sequence ID" value="ABJ02974.1"/>
    <property type="status" value="ALT_INIT"/>
    <property type="molecule type" value="Genomic_DNA"/>
</dbReference>
<dbReference type="RefSeq" id="WP_000686607.1">
    <property type="nucleotide sequence ID" value="NZ_CADILS010000090.1"/>
</dbReference>
<dbReference type="SMR" id="A1AH34"/>
<dbReference type="KEGG" id="ecv:APECO1_2956"/>
<dbReference type="HOGENOM" id="CLU_076324_0_1_6"/>
<dbReference type="Proteomes" id="UP000008216">
    <property type="component" value="Chromosome"/>
</dbReference>
<dbReference type="GO" id="GO:0005737">
    <property type="term" value="C:cytoplasm"/>
    <property type="evidence" value="ECO:0007669"/>
    <property type="project" value="UniProtKB-SubCell"/>
</dbReference>
<dbReference type="GO" id="GO:0008990">
    <property type="term" value="F:rRNA (guanine-N2-)-methyltransferase activity"/>
    <property type="evidence" value="ECO:0007669"/>
    <property type="project" value="UniProtKB-UniRule"/>
</dbReference>
<dbReference type="CDD" id="cd02440">
    <property type="entry name" value="AdoMet_MTases"/>
    <property type="match status" value="1"/>
</dbReference>
<dbReference type="FunFam" id="3.40.1630.10:FF:000001">
    <property type="entry name" value="Ribosomal RNA small subunit methyltransferase J"/>
    <property type="match status" value="1"/>
</dbReference>
<dbReference type="FunFam" id="3.40.50.150:FF:000072">
    <property type="entry name" value="Ribosomal RNA small subunit methyltransferase J"/>
    <property type="match status" value="1"/>
</dbReference>
<dbReference type="Gene3D" id="3.40.50.150">
    <property type="entry name" value="Vaccinia Virus protein VP39"/>
    <property type="match status" value="1"/>
</dbReference>
<dbReference type="Gene3D" id="3.40.1630.10">
    <property type="entry name" value="YhiQ-like domain"/>
    <property type="match status" value="1"/>
</dbReference>
<dbReference type="HAMAP" id="MF_01523">
    <property type="entry name" value="16SrRNA_methyltr_J"/>
    <property type="match status" value="1"/>
</dbReference>
<dbReference type="InterPro" id="IPR007536">
    <property type="entry name" value="16SrRNA_methylTrfase_J"/>
</dbReference>
<dbReference type="InterPro" id="IPR029063">
    <property type="entry name" value="SAM-dependent_MTases_sf"/>
</dbReference>
<dbReference type="NCBIfam" id="NF008012">
    <property type="entry name" value="PRK10742.1"/>
    <property type="match status" value="1"/>
</dbReference>
<dbReference type="PANTHER" id="PTHR36112">
    <property type="entry name" value="RIBOSOMAL RNA SMALL SUBUNIT METHYLTRANSFERASE J"/>
    <property type="match status" value="1"/>
</dbReference>
<dbReference type="PANTHER" id="PTHR36112:SF1">
    <property type="entry name" value="RIBOSOMAL RNA SMALL SUBUNIT METHYLTRANSFERASE J"/>
    <property type="match status" value="1"/>
</dbReference>
<dbReference type="Pfam" id="PF04445">
    <property type="entry name" value="SAM_MT"/>
    <property type="match status" value="1"/>
</dbReference>
<dbReference type="SUPFAM" id="SSF53335">
    <property type="entry name" value="S-adenosyl-L-methionine-dependent methyltransferases"/>
    <property type="match status" value="1"/>
</dbReference>
<evidence type="ECO:0000255" key="1">
    <source>
        <dbReference type="HAMAP-Rule" id="MF_01523"/>
    </source>
</evidence>
<evidence type="ECO:0000305" key="2"/>
<organism>
    <name type="scientific">Escherichia coli O1:K1 / APEC</name>
    <dbReference type="NCBI Taxonomy" id="405955"/>
    <lineage>
        <taxon>Bacteria</taxon>
        <taxon>Pseudomonadati</taxon>
        <taxon>Pseudomonadota</taxon>
        <taxon>Gammaproteobacteria</taxon>
        <taxon>Enterobacterales</taxon>
        <taxon>Enterobacteriaceae</taxon>
        <taxon>Escherichia</taxon>
    </lineage>
</organism>
<name>RSMJ_ECOK1</name>
<sequence>MKICLIDETGAGDGALSVLAARWGLEHDEDNLMALVLTPEHLELRKRDEPKLGGIFVDFVGGAMAHRRKFGGGRGEAVAKAVGIKGDYLPDVVDATAGLGRDAFVLASVGCRVRMLERNPVVAALLDDGLARGYADAEIGGWLQERLQLIHASSLTALSDITPRPQVVYLDPMFPHKQKSALVKKEMRVFQSLVGPDLDADGLLEPARLLATKRVVVKRPDYAPPLANVATPNAVVTKGHRFDIYAGTPV</sequence>
<accession>A1AH34</accession>
<feature type="chain" id="PRO_0000292628" description="Ribosomal RNA small subunit methyltransferase J">
    <location>
        <begin position="1"/>
        <end position="250"/>
    </location>
</feature>
<feature type="binding site" evidence="1">
    <location>
        <begin position="101"/>
        <end position="102"/>
    </location>
    <ligand>
        <name>S-adenosyl-L-methionine</name>
        <dbReference type="ChEBI" id="CHEBI:59789"/>
    </ligand>
</feature>
<feature type="binding site" evidence="1">
    <location>
        <begin position="117"/>
        <end position="118"/>
    </location>
    <ligand>
        <name>S-adenosyl-L-methionine</name>
        <dbReference type="ChEBI" id="CHEBI:59789"/>
    </ligand>
</feature>
<feature type="binding site" evidence="1">
    <location>
        <begin position="153"/>
        <end position="154"/>
    </location>
    <ligand>
        <name>S-adenosyl-L-methionine</name>
        <dbReference type="ChEBI" id="CHEBI:59789"/>
    </ligand>
</feature>
<feature type="binding site" evidence="1">
    <location>
        <position position="171"/>
    </location>
    <ligand>
        <name>S-adenosyl-L-methionine</name>
        <dbReference type="ChEBI" id="CHEBI:59789"/>
    </ligand>
</feature>
<proteinExistence type="inferred from homology"/>